<gene>
    <name type="primary">CYC</name>
</gene>
<keyword id="KW-0007">Acetylation</keyword>
<keyword id="KW-0903">Direct protein sequencing</keyword>
<keyword id="KW-0249">Electron transport</keyword>
<keyword id="KW-0349">Heme</keyword>
<keyword id="KW-0408">Iron</keyword>
<keyword id="KW-0479">Metal-binding</keyword>
<keyword id="KW-0496">Mitochondrion</keyword>
<keyword id="KW-0679">Respiratory chain</keyword>
<keyword id="KW-0813">Transport</keyword>
<comment type="function">
    <text>Electron carrier protein. The oxidized form of the cytochrome c heme group can accept an electron from the heme group of the cytochrome c1 subunit of cytochrome reductase. Cytochrome c then transfers this electron to the cytochrome oxidase complex, the final protein carrier in the mitochondrial electron-transport chain.</text>
</comment>
<comment type="subcellular location">
    <subcellularLocation>
        <location>Mitochondrion intermembrane space</location>
    </subcellularLocation>
    <text>Loosely associated with the inner membrane.</text>
</comment>
<comment type="PTM">
    <text>Binds 1 heme c group covalently per subunit.</text>
</comment>
<comment type="similarity">
    <text evidence="2">Belongs to the cytochrome c family.</text>
</comment>
<comment type="online information" name="Protein Spotlight">
    <link uri="https://www.proteinspotlight.org/back_issues/076"/>
    <text>Life shuttle - Issue 76 of November 2006</text>
</comment>
<evidence type="ECO:0000269" key="1">
    <source ref="1"/>
</evidence>
<evidence type="ECO:0000305" key="2"/>
<sequence length="105" mass="11652">MGDVEKGKKIFVQKCSQCHTVEKGGKHKTGPNLHGLFGRKTGQAEGFSYTDANKNKGITWGEDTLMEYLENPKKYIPGTKMIFAGIKKKSERADLIAYLKDATAK</sequence>
<organism>
    <name type="scientific">Anas platyrhynchos</name>
    <name type="common">Mallard</name>
    <name type="synonym">Anas boschas</name>
    <dbReference type="NCBI Taxonomy" id="8839"/>
    <lineage>
        <taxon>Eukaryota</taxon>
        <taxon>Metazoa</taxon>
        <taxon>Chordata</taxon>
        <taxon>Craniata</taxon>
        <taxon>Vertebrata</taxon>
        <taxon>Euteleostomi</taxon>
        <taxon>Archelosauria</taxon>
        <taxon>Archosauria</taxon>
        <taxon>Dinosauria</taxon>
        <taxon>Saurischia</taxon>
        <taxon>Theropoda</taxon>
        <taxon>Coelurosauria</taxon>
        <taxon>Aves</taxon>
        <taxon>Neognathae</taxon>
        <taxon>Galloanserae</taxon>
        <taxon>Anseriformes</taxon>
        <taxon>Anatidae</taxon>
        <taxon>Anatinae</taxon>
        <taxon>Anas</taxon>
    </lineage>
</organism>
<accession>P00020</accession>
<feature type="initiator methionine" description="Removed" evidence="1">
    <location>
        <position position="1"/>
    </location>
</feature>
<feature type="chain" id="PRO_0000108237" description="Cytochrome c">
    <location>
        <begin position="2"/>
        <end position="105"/>
    </location>
</feature>
<feature type="binding site" description="covalent">
    <location>
        <position position="15"/>
    </location>
    <ligand>
        <name>heme c</name>
        <dbReference type="ChEBI" id="CHEBI:61717"/>
    </ligand>
</feature>
<feature type="binding site" description="covalent">
    <location>
        <position position="18"/>
    </location>
    <ligand>
        <name>heme c</name>
        <dbReference type="ChEBI" id="CHEBI:61717"/>
    </ligand>
</feature>
<feature type="binding site" description="axial binding residue">
    <location>
        <position position="19"/>
    </location>
    <ligand>
        <name>heme c</name>
        <dbReference type="ChEBI" id="CHEBI:61717"/>
    </ligand>
    <ligandPart>
        <name>Fe</name>
        <dbReference type="ChEBI" id="CHEBI:18248"/>
    </ligandPart>
</feature>
<feature type="binding site" description="axial binding residue">
    <location>
        <position position="81"/>
    </location>
    <ligand>
        <name>heme c</name>
        <dbReference type="ChEBI" id="CHEBI:61717"/>
    </ligand>
    <ligandPart>
        <name>Fe</name>
        <dbReference type="ChEBI" id="CHEBI:18248"/>
    </ligandPart>
</feature>
<feature type="modified residue" description="N-acetylglycine" evidence="1">
    <location>
        <position position="2"/>
    </location>
</feature>
<protein>
    <recommendedName>
        <fullName>Cytochrome c</fullName>
    </recommendedName>
</protein>
<name>CYC_ANAPL</name>
<dbReference type="PIR" id="A00015">
    <property type="entry name" value="CCDK"/>
</dbReference>
<dbReference type="RefSeq" id="XP_005024329.1">
    <property type="nucleotide sequence ID" value="XM_005024272.2"/>
</dbReference>
<dbReference type="SMR" id="P00020"/>
<dbReference type="Ensembl" id="ENSAPLT00020001779.1">
    <property type="protein sequence ID" value="ENSAPLP00020001659.1"/>
    <property type="gene ID" value="ENSAPLG00020001215.1"/>
</dbReference>
<dbReference type="OMA" id="KARCAQC"/>
<dbReference type="OrthoDB" id="449280at2759"/>
<dbReference type="Proteomes" id="UP000694400">
    <property type="component" value="Chromosome 2"/>
</dbReference>
<dbReference type="GO" id="GO:0005829">
    <property type="term" value="C:cytosol"/>
    <property type="evidence" value="ECO:0000250"/>
    <property type="project" value="UniProtKB"/>
</dbReference>
<dbReference type="GO" id="GO:0005758">
    <property type="term" value="C:mitochondrial intermembrane space"/>
    <property type="evidence" value="ECO:0007669"/>
    <property type="project" value="UniProtKB-SubCell"/>
</dbReference>
<dbReference type="GO" id="GO:0009055">
    <property type="term" value="F:electron transfer activity"/>
    <property type="evidence" value="ECO:0007669"/>
    <property type="project" value="InterPro"/>
</dbReference>
<dbReference type="GO" id="GO:0020037">
    <property type="term" value="F:heme binding"/>
    <property type="evidence" value="ECO:0007669"/>
    <property type="project" value="InterPro"/>
</dbReference>
<dbReference type="GO" id="GO:0046872">
    <property type="term" value="F:metal ion binding"/>
    <property type="evidence" value="ECO:0007669"/>
    <property type="project" value="UniProtKB-KW"/>
</dbReference>
<dbReference type="FunFam" id="1.10.760.10:FF:000008">
    <property type="entry name" value="Cytochrome c"/>
    <property type="match status" value="1"/>
</dbReference>
<dbReference type="Gene3D" id="1.10.760.10">
    <property type="entry name" value="Cytochrome c-like domain"/>
    <property type="match status" value="1"/>
</dbReference>
<dbReference type="InterPro" id="IPR009056">
    <property type="entry name" value="Cyt_c-like_dom"/>
</dbReference>
<dbReference type="InterPro" id="IPR036909">
    <property type="entry name" value="Cyt_c-like_dom_sf"/>
</dbReference>
<dbReference type="InterPro" id="IPR002327">
    <property type="entry name" value="Cyt_c_1A/1B"/>
</dbReference>
<dbReference type="PANTHER" id="PTHR11961">
    <property type="entry name" value="CYTOCHROME C"/>
    <property type="match status" value="1"/>
</dbReference>
<dbReference type="Pfam" id="PF00034">
    <property type="entry name" value="Cytochrom_C"/>
    <property type="match status" value="1"/>
</dbReference>
<dbReference type="PRINTS" id="PR00604">
    <property type="entry name" value="CYTCHRMECIAB"/>
</dbReference>
<dbReference type="SUPFAM" id="SSF46626">
    <property type="entry name" value="Cytochrome c"/>
    <property type="match status" value="1"/>
</dbReference>
<dbReference type="PROSITE" id="PS51007">
    <property type="entry name" value="CYTC"/>
    <property type="match status" value="1"/>
</dbReference>
<reference key="1">
    <citation type="submission" date="1966-06" db="PIR data bank">
        <authorList>
            <person name="Chan S.K."/>
            <person name="Tulloss I."/>
            <person name="Margoliash E."/>
        </authorList>
    </citation>
    <scope>PROTEIN SEQUENCE OF 2-6; 93-100 AND 101-105</scope>
    <scope>ACETYLATION AT GLY-2</scope>
</reference>
<proteinExistence type="evidence at protein level"/>